<comment type="function">
    <text evidence="1">Single strand-specific metallo-endoribonuclease involved in late-stage 70S ribosome quality control and in maturation of the 3' terminus of the 16S rRNA.</text>
</comment>
<comment type="cofactor">
    <cofactor evidence="1">
        <name>Zn(2+)</name>
        <dbReference type="ChEBI" id="CHEBI:29105"/>
    </cofactor>
    <text evidence="1">Binds 1 zinc ion.</text>
</comment>
<comment type="subcellular location">
    <subcellularLocation>
        <location evidence="1">Cytoplasm</location>
    </subcellularLocation>
</comment>
<comment type="similarity">
    <text evidence="1">Belongs to the endoribonuclease YbeY family.</text>
</comment>
<dbReference type="EC" id="3.1.-.-" evidence="1"/>
<dbReference type="EMBL" id="CP000542">
    <property type="protein sequence ID" value="ABM59771.1"/>
    <property type="molecule type" value="Genomic_DNA"/>
</dbReference>
<dbReference type="RefSeq" id="WP_011811758.1">
    <property type="nucleotide sequence ID" value="NC_008786.1"/>
</dbReference>
<dbReference type="SMR" id="A1WQ64"/>
<dbReference type="STRING" id="391735.Veis_4066"/>
<dbReference type="GeneID" id="76462410"/>
<dbReference type="KEGG" id="vei:Veis_4066"/>
<dbReference type="eggNOG" id="COG0319">
    <property type="taxonomic scope" value="Bacteria"/>
</dbReference>
<dbReference type="HOGENOM" id="CLU_106710_0_1_4"/>
<dbReference type="OrthoDB" id="9807740at2"/>
<dbReference type="Proteomes" id="UP000000374">
    <property type="component" value="Chromosome"/>
</dbReference>
<dbReference type="GO" id="GO:0005737">
    <property type="term" value="C:cytoplasm"/>
    <property type="evidence" value="ECO:0007669"/>
    <property type="project" value="UniProtKB-SubCell"/>
</dbReference>
<dbReference type="GO" id="GO:0004222">
    <property type="term" value="F:metalloendopeptidase activity"/>
    <property type="evidence" value="ECO:0007669"/>
    <property type="project" value="InterPro"/>
</dbReference>
<dbReference type="GO" id="GO:0004521">
    <property type="term" value="F:RNA endonuclease activity"/>
    <property type="evidence" value="ECO:0007669"/>
    <property type="project" value="UniProtKB-UniRule"/>
</dbReference>
<dbReference type="GO" id="GO:0008270">
    <property type="term" value="F:zinc ion binding"/>
    <property type="evidence" value="ECO:0007669"/>
    <property type="project" value="UniProtKB-UniRule"/>
</dbReference>
<dbReference type="GO" id="GO:0006364">
    <property type="term" value="P:rRNA processing"/>
    <property type="evidence" value="ECO:0007669"/>
    <property type="project" value="UniProtKB-UniRule"/>
</dbReference>
<dbReference type="Gene3D" id="3.40.390.30">
    <property type="entry name" value="Metalloproteases ('zincins'), catalytic domain"/>
    <property type="match status" value="1"/>
</dbReference>
<dbReference type="HAMAP" id="MF_00009">
    <property type="entry name" value="Endoribonucl_YbeY"/>
    <property type="match status" value="1"/>
</dbReference>
<dbReference type="InterPro" id="IPR023091">
    <property type="entry name" value="MetalPrtase_cat_dom_sf_prd"/>
</dbReference>
<dbReference type="InterPro" id="IPR002036">
    <property type="entry name" value="YbeY"/>
</dbReference>
<dbReference type="InterPro" id="IPR020549">
    <property type="entry name" value="YbeY_CS"/>
</dbReference>
<dbReference type="NCBIfam" id="TIGR00043">
    <property type="entry name" value="rRNA maturation RNase YbeY"/>
    <property type="match status" value="1"/>
</dbReference>
<dbReference type="PANTHER" id="PTHR46986">
    <property type="entry name" value="ENDORIBONUCLEASE YBEY, CHLOROPLASTIC"/>
    <property type="match status" value="1"/>
</dbReference>
<dbReference type="PANTHER" id="PTHR46986:SF1">
    <property type="entry name" value="ENDORIBONUCLEASE YBEY, CHLOROPLASTIC"/>
    <property type="match status" value="1"/>
</dbReference>
<dbReference type="Pfam" id="PF02130">
    <property type="entry name" value="YbeY"/>
    <property type="match status" value="1"/>
</dbReference>
<dbReference type="SUPFAM" id="SSF55486">
    <property type="entry name" value="Metalloproteases ('zincins'), catalytic domain"/>
    <property type="match status" value="1"/>
</dbReference>
<dbReference type="PROSITE" id="PS01306">
    <property type="entry name" value="UPF0054"/>
    <property type="match status" value="1"/>
</dbReference>
<sequence>MPLKPLALSLQWGRFDAAAAQRSALPRHLIRRWIRHALTTDAEITVRIVGADEGRQLNRTYRNKDYATNVLTFVYSQAPLVTADLLLCAPVIEREAQQQGKHLQAHYAHMLVHGTLHAQGWDHEGSADADAMQARETQIMQALGFADPYARQPG</sequence>
<feature type="chain" id="PRO_0000284346" description="Endoribonuclease YbeY">
    <location>
        <begin position="1"/>
        <end position="154"/>
    </location>
</feature>
<feature type="binding site" evidence="1">
    <location>
        <position position="113"/>
    </location>
    <ligand>
        <name>Zn(2+)</name>
        <dbReference type="ChEBI" id="CHEBI:29105"/>
        <note>catalytic</note>
    </ligand>
</feature>
<feature type="binding site" evidence="1">
    <location>
        <position position="117"/>
    </location>
    <ligand>
        <name>Zn(2+)</name>
        <dbReference type="ChEBI" id="CHEBI:29105"/>
        <note>catalytic</note>
    </ligand>
</feature>
<feature type="binding site" evidence="1">
    <location>
        <position position="123"/>
    </location>
    <ligand>
        <name>Zn(2+)</name>
        <dbReference type="ChEBI" id="CHEBI:29105"/>
        <note>catalytic</note>
    </ligand>
</feature>
<name>YBEY_VEREI</name>
<gene>
    <name evidence="1" type="primary">ybeY</name>
    <name type="ordered locus">Veis_4066</name>
</gene>
<keyword id="KW-0963">Cytoplasm</keyword>
<keyword id="KW-0255">Endonuclease</keyword>
<keyword id="KW-0378">Hydrolase</keyword>
<keyword id="KW-0479">Metal-binding</keyword>
<keyword id="KW-0540">Nuclease</keyword>
<keyword id="KW-1185">Reference proteome</keyword>
<keyword id="KW-0690">Ribosome biogenesis</keyword>
<keyword id="KW-0698">rRNA processing</keyword>
<keyword id="KW-0862">Zinc</keyword>
<evidence type="ECO:0000255" key="1">
    <source>
        <dbReference type="HAMAP-Rule" id="MF_00009"/>
    </source>
</evidence>
<reference key="1">
    <citation type="submission" date="2006-12" db="EMBL/GenBank/DDBJ databases">
        <title>Complete sequence of chromosome 1 of Verminephrobacter eiseniae EF01-2.</title>
        <authorList>
            <person name="Copeland A."/>
            <person name="Lucas S."/>
            <person name="Lapidus A."/>
            <person name="Barry K."/>
            <person name="Detter J.C."/>
            <person name="Glavina del Rio T."/>
            <person name="Dalin E."/>
            <person name="Tice H."/>
            <person name="Pitluck S."/>
            <person name="Chertkov O."/>
            <person name="Brettin T."/>
            <person name="Bruce D."/>
            <person name="Han C."/>
            <person name="Tapia R."/>
            <person name="Gilna P."/>
            <person name="Schmutz J."/>
            <person name="Larimer F."/>
            <person name="Land M."/>
            <person name="Hauser L."/>
            <person name="Kyrpides N."/>
            <person name="Kim E."/>
            <person name="Stahl D."/>
            <person name="Richardson P."/>
        </authorList>
    </citation>
    <scope>NUCLEOTIDE SEQUENCE [LARGE SCALE GENOMIC DNA]</scope>
    <source>
        <strain>EF01-2</strain>
    </source>
</reference>
<organism>
    <name type="scientific">Verminephrobacter eiseniae (strain EF01-2)</name>
    <dbReference type="NCBI Taxonomy" id="391735"/>
    <lineage>
        <taxon>Bacteria</taxon>
        <taxon>Pseudomonadati</taxon>
        <taxon>Pseudomonadota</taxon>
        <taxon>Betaproteobacteria</taxon>
        <taxon>Burkholderiales</taxon>
        <taxon>Comamonadaceae</taxon>
        <taxon>Verminephrobacter</taxon>
    </lineage>
</organism>
<accession>A1WQ64</accession>
<proteinExistence type="inferred from homology"/>
<protein>
    <recommendedName>
        <fullName evidence="1">Endoribonuclease YbeY</fullName>
        <ecNumber evidence="1">3.1.-.-</ecNumber>
    </recommendedName>
</protein>